<name>GATB_ACICJ</name>
<reference key="1">
    <citation type="submission" date="2007-05" db="EMBL/GenBank/DDBJ databases">
        <title>Complete sequence of chromosome of Acidiphilium cryptum JF-5.</title>
        <authorList>
            <consortium name="US DOE Joint Genome Institute"/>
            <person name="Copeland A."/>
            <person name="Lucas S."/>
            <person name="Lapidus A."/>
            <person name="Barry K."/>
            <person name="Detter J.C."/>
            <person name="Glavina del Rio T."/>
            <person name="Hammon N."/>
            <person name="Israni S."/>
            <person name="Dalin E."/>
            <person name="Tice H."/>
            <person name="Pitluck S."/>
            <person name="Sims D."/>
            <person name="Brettin T."/>
            <person name="Bruce D."/>
            <person name="Han C."/>
            <person name="Schmutz J."/>
            <person name="Larimer F."/>
            <person name="Land M."/>
            <person name="Hauser L."/>
            <person name="Kyrpides N."/>
            <person name="Kim E."/>
            <person name="Magnuson T."/>
            <person name="Richardson P."/>
        </authorList>
    </citation>
    <scope>NUCLEOTIDE SEQUENCE [LARGE SCALE GENOMIC DNA]</scope>
    <source>
        <strain>JF-5</strain>
    </source>
</reference>
<accession>A5FWV7</accession>
<evidence type="ECO:0000255" key="1">
    <source>
        <dbReference type="HAMAP-Rule" id="MF_00121"/>
    </source>
</evidence>
<keyword id="KW-0067">ATP-binding</keyword>
<keyword id="KW-0436">Ligase</keyword>
<keyword id="KW-0547">Nucleotide-binding</keyword>
<keyword id="KW-0648">Protein biosynthesis</keyword>
<keyword id="KW-1185">Reference proteome</keyword>
<gene>
    <name evidence="1" type="primary">gatB</name>
    <name type="ordered locus">Acry_0870</name>
</gene>
<sequence length="487" mass="53601">MSYVIEGTTGAWELVIGLEVHAQVISRSKLFSGAATAFGAEPNSQVSFVDAGFPGMLPVINRECVAQAVRTGLGLAAHINLVSRFDRKNYFYADLPQGYQISQYEHPIVGAGAIEIELESGETRTIGITRLHLEQDAGKSMHDQHPSKSLIDLNRSGVALMEIVSEPDMRSPEEAGAYLRKLRTILRYLGTCDGNMDEGSMRADVNVSVRKHGEPFRTRCEIKNVNSIRFVMQAIEAEAKRQIEIWEAGGTVDQETRLFEPARGVTRSMRSKEDAHDYRYFPEPDLLPLVLEEEWVESLKATLPELPDAKRARLMRDFGLSRYEASIFVMEQVTADFFETVAAGRDAKLVANWMLGDFFAHLNRTGTSIETSPVTAARLGELLDLITDKTINGKIAKEVLELMFDTGDAAGAIVEARGLKQVTDTGAIDEAIDRVVAANADKLAEYKAGKDKLFGFFVGQVMKAMQGKGNPALVNEALKRKIGEPGA</sequence>
<proteinExistence type="inferred from homology"/>
<dbReference type="EC" id="6.3.5.-" evidence="1"/>
<dbReference type="EMBL" id="CP000697">
    <property type="protein sequence ID" value="ABQ30089.1"/>
    <property type="molecule type" value="Genomic_DNA"/>
</dbReference>
<dbReference type="RefSeq" id="WP_011941833.1">
    <property type="nucleotide sequence ID" value="NC_009484.1"/>
</dbReference>
<dbReference type="SMR" id="A5FWV7"/>
<dbReference type="STRING" id="349163.Acry_0870"/>
<dbReference type="KEGG" id="acr:Acry_0870"/>
<dbReference type="eggNOG" id="COG0064">
    <property type="taxonomic scope" value="Bacteria"/>
</dbReference>
<dbReference type="HOGENOM" id="CLU_019240_0_0_5"/>
<dbReference type="Proteomes" id="UP000000245">
    <property type="component" value="Chromosome"/>
</dbReference>
<dbReference type="GO" id="GO:0050566">
    <property type="term" value="F:asparaginyl-tRNA synthase (glutamine-hydrolyzing) activity"/>
    <property type="evidence" value="ECO:0007669"/>
    <property type="project" value="RHEA"/>
</dbReference>
<dbReference type="GO" id="GO:0005524">
    <property type="term" value="F:ATP binding"/>
    <property type="evidence" value="ECO:0007669"/>
    <property type="project" value="UniProtKB-KW"/>
</dbReference>
<dbReference type="GO" id="GO:0050567">
    <property type="term" value="F:glutaminyl-tRNA synthase (glutamine-hydrolyzing) activity"/>
    <property type="evidence" value="ECO:0007669"/>
    <property type="project" value="UniProtKB-UniRule"/>
</dbReference>
<dbReference type="GO" id="GO:0070681">
    <property type="term" value="P:glutaminyl-tRNAGln biosynthesis via transamidation"/>
    <property type="evidence" value="ECO:0007669"/>
    <property type="project" value="TreeGrafter"/>
</dbReference>
<dbReference type="GO" id="GO:0006412">
    <property type="term" value="P:translation"/>
    <property type="evidence" value="ECO:0007669"/>
    <property type="project" value="UniProtKB-UniRule"/>
</dbReference>
<dbReference type="FunFam" id="1.10.10.410:FF:000001">
    <property type="entry name" value="Aspartyl/glutamyl-tRNA(Asn/Gln) amidotransferase subunit B"/>
    <property type="match status" value="1"/>
</dbReference>
<dbReference type="Gene3D" id="1.10.10.410">
    <property type="match status" value="1"/>
</dbReference>
<dbReference type="Gene3D" id="1.10.150.380">
    <property type="entry name" value="GatB domain, N-terminal subdomain"/>
    <property type="match status" value="1"/>
</dbReference>
<dbReference type="HAMAP" id="MF_00121">
    <property type="entry name" value="GatB"/>
    <property type="match status" value="1"/>
</dbReference>
<dbReference type="InterPro" id="IPR017959">
    <property type="entry name" value="Asn/Gln-tRNA_amidoTrfase_suB/E"/>
</dbReference>
<dbReference type="InterPro" id="IPR006075">
    <property type="entry name" value="Asn/Gln-tRNA_Trfase_suB/E_cat"/>
</dbReference>
<dbReference type="InterPro" id="IPR018027">
    <property type="entry name" value="Asn/Gln_amidotransferase"/>
</dbReference>
<dbReference type="InterPro" id="IPR003789">
    <property type="entry name" value="Asn/Gln_tRNA_amidoTrase-B-like"/>
</dbReference>
<dbReference type="InterPro" id="IPR004413">
    <property type="entry name" value="GatB"/>
</dbReference>
<dbReference type="InterPro" id="IPR042114">
    <property type="entry name" value="GatB_C_1"/>
</dbReference>
<dbReference type="InterPro" id="IPR023168">
    <property type="entry name" value="GatB_Yqey_C_2"/>
</dbReference>
<dbReference type="InterPro" id="IPR017958">
    <property type="entry name" value="Gln-tRNA_amidoTrfase_suB_CS"/>
</dbReference>
<dbReference type="InterPro" id="IPR014746">
    <property type="entry name" value="Gln_synth/guanido_kin_cat_dom"/>
</dbReference>
<dbReference type="NCBIfam" id="TIGR00133">
    <property type="entry name" value="gatB"/>
    <property type="match status" value="1"/>
</dbReference>
<dbReference type="NCBIfam" id="NF004012">
    <property type="entry name" value="PRK05477.1-2"/>
    <property type="match status" value="1"/>
</dbReference>
<dbReference type="NCBIfam" id="NF004014">
    <property type="entry name" value="PRK05477.1-4"/>
    <property type="match status" value="1"/>
</dbReference>
<dbReference type="NCBIfam" id="NF004015">
    <property type="entry name" value="PRK05477.1-5"/>
    <property type="match status" value="1"/>
</dbReference>
<dbReference type="PANTHER" id="PTHR11659">
    <property type="entry name" value="GLUTAMYL-TRNA GLN AMIDOTRANSFERASE SUBUNIT B MITOCHONDRIAL AND PROKARYOTIC PET112-RELATED"/>
    <property type="match status" value="1"/>
</dbReference>
<dbReference type="PANTHER" id="PTHR11659:SF0">
    <property type="entry name" value="GLUTAMYL-TRNA(GLN) AMIDOTRANSFERASE SUBUNIT B, MITOCHONDRIAL"/>
    <property type="match status" value="1"/>
</dbReference>
<dbReference type="Pfam" id="PF02934">
    <property type="entry name" value="GatB_N"/>
    <property type="match status" value="1"/>
</dbReference>
<dbReference type="Pfam" id="PF02637">
    <property type="entry name" value="GatB_Yqey"/>
    <property type="match status" value="1"/>
</dbReference>
<dbReference type="SMART" id="SM00845">
    <property type="entry name" value="GatB_Yqey"/>
    <property type="match status" value="1"/>
</dbReference>
<dbReference type="SUPFAM" id="SSF89095">
    <property type="entry name" value="GatB/YqeY motif"/>
    <property type="match status" value="1"/>
</dbReference>
<dbReference type="SUPFAM" id="SSF55931">
    <property type="entry name" value="Glutamine synthetase/guanido kinase"/>
    <property type="match status" value="1"/>
</dbReference>
<dbReference type="PROSITE" id="PS01234">
    <property type="entry name" value="GATB"/>
    <property type="match status" value="1"/>
</dbReference>
<comment type="function">
    <text evidence="1">Allows the formation of correctly charged Asn-tRNA(Asn) or Gln-tRNA(Gln) through the transamidation of misacylated Asp-tRNA(Asn) or Glu-tRNA(Gln) in organisms which lack either or both of asparaginyl-tRNA or glutaminyl-tRNA synthetases. The reaction takes place in the presence of glutamine and ATP through an activated phospho-Asp-tRNA(Asn) or phospho-Glu-tRNA(Gln).</text>
</comment>
<comment type="catalytic activity">
    <reaction evidence="1">
        <text>L-glutamyl-tRNA(Gln) + L-glutamine + ATP + H2O = L-glutaminyl-tRNA(Gln) + L-glutamate + ADP + phosphate + H(+)</text>
        <dbReference type="Rhea" id="RHEA:17521"/>
        <dbReference type="Rhea" id="RHEA-COMP:9681"/>
        <dbReference type="Rhea" id="RHEA-COMP:9684"/>
        <dbReference type="ChEBI" id="CHEBI:15377"/>
        <dbReference type="ChEBI" id="CHEBI:15378"/>
        <dbReference type="ChEBI" id="CHEBI:29985"/>
        <dbReference type="ChEBI" id="CHEBI:30616"/>
        <dbReference type="ChEBI" id="CHEBI:43474"/>
        <dbReference type="ChEBI" id="CHEBI:58359"/>
        <dbReference type="ChEBI" id="CHEBI:78520"/>
        <dbReference type="ChEBI" id="CHEBI:78521"/>
        <dbReference type="ChEBI" id="CHEBI:456216"/>
    </reaction>
</comment>
<comment type="catalytic activity">
    <reaction evidence="1">
        <text>L-aspartyl-tRNA(Asn) + L-glutamine + ATP + H2O = L-asparaginyl-tRNA(Asn) + L-glutamate + ADP + phosphate + 2 H(+)</text>
        <dbReference type="Rhea" id="RHEA:14513"/>
        <dbReference type="Rhea" id="RHEA-COMP:9674"/>
        <dbReference type="Rhea" id="RHEA-COMP:9677"/>
        <dbReference type="ChEBI" id="CHEBI:15377"/>
        <dbReference type="ChEBI" id="CHEBI:15378"/>
        <dbReference type="ChEBI" id="CHEBI:29985"/>
        <dbReference type="ChEBI" id="CHEBI:30616"/>
        <dbReference type="ChEBI" id="CHEBI:43474"/>
        <dbReference type="ChEBI" id="CHEBI:58359"/>
        <dbReference type="ChEBI" id="CHEBI:78515"/>
        <dbReference type="ChEBI" id="CHEBI:78516"/>
        <dbReference type="ChEBI" id="CHEBI:456216"/>
    </reaction>
</comment>
<comment type="subunit">
    <text evidence="1">Heterotrimer of A, B and C subunits.</text>
</comment>
<comment type="similarity">
    <text evidence="1">Belongs to the GatB/GatE family. GatB subfamily.</text>
</comment>
<protein>
    <recommendedName>
        <fullName evidence="1">Aspartyl/glutamyl-tRNA(Asn/Gln) amidotransferase subunit B</fullName>
        <shortName evidence="1">Asp/Glu-ADT subunit B</shortName>
        <ecNumber evidence="1">6.3.5.-</ecNumber>
    </recommendedName>
</protein>
<feature type="chain" id="PRO_1000015927" description="Aspartyl/glutamyl-tRNA(Asn/Gln) amidotransferase subunit B">
    <location>
        <begin position="1"/>
        <end position="487"/>
    </location>
</feature>
<organism>
    <name type="scientific">Acidiphilium cryptum (strain JF-5)</name>
    <dbReference type="NCBI Taxonomy" id="349163"/>
    <lineage>
        <taxon>Bacteria</taxon>
        <taxon>Pseudomonadati</taxon>
        <taxon>Pseudomonadota</taxon>
        <taxon>Alphaproteobacteria</taxon>
        <taxon>Acetobacterales</taxon>
        <taxon>Acidocellaceae</taxon>
        <taxon>Acidiphilium</taxon>
    </lineage>
</organism>